<gene>
    <name type="primary">RBP1</name>
    <name type="synonym">CRBP1</name>
</gene>
<reference key="1">
    <citation type="journal article" date="1985" name="Biochem. Biophys. Res. Commun.">
        <title>Cloning and sequencing of a full length cDNA corresponding to human cellular retinol-binding protein.</title>
        <authorList>
            <person name="Colantuoni V."/>
            <person name="Cortese R."/>
            <person name="Nilsson M."/>
            <person name="Lundvall J."/>
            <person name="Baavik C.-O."/>
            <person name="Eriksson U."/>
            <person name="Peterson P.A."/>
            <person name="Sundelin J."/>
        </authorList>
    </citation>
    <scope>NUCLEOTIDE SEQUENCE [MRNA] (ISOFORM 1)</scope>
</reference>
<reference key="2">
    <citation type="journal article" date="1988" name="Eur. J. Biochem.">
        <title>Human cellular retinol-binding protein gene organization and chromosomal location.</title>
        <authorList>
            <person name="Nilsson M.H.L."/>
            <person name="Spurr N.K."/>
            <person name="Lundvall J."/>
            <person name="Rask L."/>
            <person name="Peterson P.A."/>
        </authorList>
    </citation>
    <scope>NUCLEOTIDE SEQUENCE [GENOMIC DNA]</scope>
</reference>
<reference key="3">
    <citation type="journal article" date="2004" name="Nat. Genet.">
        <title>Complete sequencing and characterization of 21,243 full-length human cDNAs.</title>
        <authorList>
            <person name="Ota T."/>
            <person name="Suzuki Y."/>
            <person name="Nishikawa T."/>
            <person name="Otsuki T."/>
            <person name="Sugiyama T."/>
            <person name="Irie R."/>
            <person name="Wakamatsu A."/>
            <person name="Hayashi K."/>
            <person name="Sato H."/>
            <person name="Nagai K."/>
            <person name="Kimura K."/>
            <person name="Makita H."/>
            <person name="Sekine M."/>
            <person name="Obayashi M."/>
            <person name="Nishi T."/>
            <person name="Shibahara T."/>
            <person name="Tanaka T."/>
            <person name="Ishii S."/>
            <person name="Yamamoto J."/>
            <person name="Saito K."/>
            <person name="Kawai Y."/>
            <person name="Isono Y."/>
            <person name="Nakamura Y."/>
            <person name="Nagahari K."/>
            <person name="Murakami K."/>
            <person name="Yasuda T."/>
            <person name="Iwayanagi T."/>
            <person name="Wagatsuma M."/>
            <person name="Shiratori A."/>
            <person name="Sudo H."/>
            <person name="Hosoiri T."/>
            <person name="Kaku Y."/>
            <person name="Kodaira H."/>
            <person name="Kondo H."/>
            <person name="Sugawara M."/>
            <person name="Takahashi M."/>
            <person name="Kanda K."/>
            <person name="Yokoi T."/>
            <person name="Furuya T."/>
            <person name="Kikkawa E."/>
            <person name="Omura Y."/>
            <person name="Abe K."/>
            <person name="Kamihara K."/>
            <person name="Katsuta N."/>
            <person name="Sato K."/>
            <person name="Tanikawa M."/>
            <person name="Yamazaki M."/>
            <person name="Ninomiya K."/>
            <person name="Ishibashi T."/>
            <person name="Yamashita H."/>
            <person name="Murakawa K."/>
            <person name="Fujimori K."/>
            <person name="Tanai H."/>
            <person name="Kimata M."/>
            <person name="Watanabe M."/>
            <person name="Hiraoka S."/>
            <person name="Chiba Y."/>
            <person name="Ishida S."/>
            <person name="Ono Y."/>
            <person name="Takiguchi S."/>
            <person name="Watanabe S."/>
            <person name="Yosida M."/>
            <person name="Hotuta T."/>
            <person name="Kusano J."/>
            <person name="Kanehori K."/>
            <person name="Takahashi-Fujii A."/>
            <person name="Hara H."/>
            <person name="Tanase T.-O."/>
            <person name="Nomura Y."/>
            <person name="Togiya S."/>
            <person name="Komai F."/>
            <person name="Hara R."/>
            <person name="Takeuchi K."/>
            <person name="Arita M."/>
            <person name="Imose N."/>
            <person name="Musashino K."/>
            <person name="Yuuki H."/>
            <person name="Oshima A."/>
            <person name="Sasaki N."/>
            <person name="Aotsuka S."/>
            <person name="Yoshikawa Y."/>
            <person name="Matsunawa H."/>
            <person name="Ichihara T."/>
            <person name="Shiohata N."/>
            <person name="Sano S."/>
            <person name="Moriya S."/>
            <person name="Momiyama H."/>
            <person name="Satoh N."/>
            <person name="Takami S."/>
            <person name="Terashima Y."/>
            <person name="Suzuki O."/>
            <person name="Nakagawa S."/>
            <person name="Senoh A."/>
            <person name="Mizoguchi H."/>
            <person name="Goto Y."/>
            <person name="Shimizu F."/>
            <person name="Wakebe H."/>
            <person name="Hishigaki H."/>
            <person name="Watanabe T."/>
            <person name="Sugiyama A."/>
            <person name="Takemoto M."/>
            <person name="Kawakami B."/>
            <person name="Yamazaki M."/>
            <person name="Watanabe K."/>
            <person name="Kumagai A."/>
            <person name="Itakura S."/>
            <person name="Fukuzumi Y."/>
            <person name="Fujimori Y."/>
            <person name="Komiyama M."/>
            <person name="Tashiro H."/>
            <person name="Tanigami A."/>
            <person name="Fujiwara T."/>
            <person name="Ono T."/>
            <person name="Yamada K."/>
            <person name="Fujii Y."/>
            <person name="Ozaki K."/>
            <person name="Hirao M."/>
            <person name="Ohmori Y."/>
            <person name="Kawabata A."/>
            <person name="Hikiji T."/>
            <person name="Kobatake N."/>
            <person name="Inagaki H."/>
            <person name="Ikema Y."/>
            <person name="Okamoto S."/>
            <person name="Okitani R."/>
            <person name="Kawakami T."/>
            <person name="Noguchi S."/>
            <person name="Itoh T."/>
            <person name="Shigeta K."/>
            <person name="Senba T."/>
            <person name="Matsumura K."/>
            <person name="Nakajima Y."/>
            <person name="Mizuno T."/>
            <person name="Morinaga M."/>
            <person name="Sasaki M."/>
            <person name="Togashi T."/>
            <person name="Oyama M."/>
            <person name="Hata H."/>
            <person name="Watanabe M."/>
            <person name="Komatsu T."/>
            <person name="Mizushima-Sugano J."/>
            <person name="Satoh T."/>
            <person name="Shirai Y."/>
            <person name="Takahashi Y."/>
            <person name="Nakagawa K."/>
            <person name="Okumura K."/>
            <person name="Nagase T."/>
            <person name="Nomura N."/>
            <person name="Kikuchi H."/>
            <person name="Masuho Y."/>
            <person name="Yamashita R."/>
            <person name="Nakai K."/>
            <person name="Yada T."/>
            <person name="Nakamura Y."/>
            <person name="Ohara O."/>
            <person name="Isogai T."/>
            <person name="Sugano S."/>
        </authorList>
    </citation>
    <scope>NUCLEOTIDE SEQUENCE [LARGE SCALE MRNA] (ISOFORMS 1; 2 AND 3)</scope>
    <source>
        <tissue>Esophagus</tissue>
        <tissue>Heart</tissue>
        <tissue>Tongue</tissue>
    </source>
</reference>
<reference key="4">
    <citation type="submission" date="2004-06" db="EMBL/GenBank/DDBJ databases">
        <title>Cloning of human full open reading frames in Gateway(TM) system entry vector (pDONR201).</title>
        <authorList>
            <person name="Ebert L."/>
            <person name="Schick M."/>
            <person name="Neubert P."/>
            <person name="Schatten R."/>
            <person name="Henze S."/>
            <person name="Korn B."/>
        </authorList>
    </citation>
    <scope>NUCLEOTIDE SEQUENCE [LARGE SCALE MRNA] (ISOFORM 1)</scope>
</reference>
<reference key="5">
    <citation type="journal article" date="2006" name="Nature">
        <title>The DNA sequence, annotation and analysis of human chromosome 3.</title>
        <authorList>
            <person name="Muzny D.M."/>
            <person name="Scherer S.E."/>
            <person name="Kaul R."/>
            <person name="Wang J."/>
            <person name="Yu J."/>
            <person name="Sudbrak R."/>
            <person name="Buhay C.J."/>
            <person name="Chen R."/>
            <person name="Cree A."/>
            <person name="Ding Y."/>
            <person name="Dugan-Rocha S."/>
            <person name="Gill R."/>
            <person name="Gunaratne P."/>
            <person name="Harris R.A."/>
            <person name="Hawes A.C."/>
            <person name="Hernandez J."/>
            <person name="Hodgson A.V."/>
            <person name="Hume J."/>
            <person name="Jackson A."/>
            <person name="Khan Z.M."/>
            <person name="Kovar-Smith C."/>
            <person name="Lewis L.R."/>
            <person name="Lozado R.J."/>
            <person name="Metzker M.L."/>
            <person name="Milosavljevic A."/>
            <person name="Miner G.R."/>
            <person name="Morgan M.B."/>
            <person name="Nazareth L.V."/>
            <person name="Scott G."/>
            <person name="Sodergren E."/>
            <person name="Song X.-Z."/>
            <person name="Steffen D."/>
            <person name="Wei S."/>
            <person name="Wheeler D.A."/>
            <person name="Wright M.W."/>
            <person name="Worley K.C."/>
            <person name="Yuan Y."/>
            <person name="Zhang Z."/>
            <person name="Adams C.Q."/>
            <person name="Ansari-Lari M.A."/>
            <person name="Ayele M."/>
            <person name="Brown M.J."/>
            <person name="Chen G."/>
            <person name="Chen Z."/>
            <person name="Clendenning J."/>
            <person name="Clerc-Blankenburg K.P."/>
            <person name="Chen R."/>
            <person name="Chen Z."/>
            <person name="Davis C."/>
            <person name="Delgado O."/>
            <person name="Dinh H.H."/>
            <person name="Dong W."/>
            <person name="Draper H."/>
            <person name="Ernst S."/>
            <person name="Fu G."/>
            <person name="Gonzalez-Garay M.L."/>
            <person name="Garcia D.K."/>
            <person name="Gillett W."/>
            <person name="Gu J."/>
            <person name="Hao B."/>
            <person name="Haugen E."/>
            <person name="Havlak P."/>
            <person name="He X."/>
            <person name="Hennig S."/>
            <person name="Hu S."/>
            <person name="Huang W."/>
            <person name="Jackson L.R."/>
            <person name="Jacob L.S."/>
            <person name="Kelly S.H."/>
            <person name="Kube M."/>
            <person name="Levy R."/>
            <person name="Li Z."/>
            <person name="Liu B."/>
            <person name="Liu J."/>
            <person name="Liu W."/>
            <person name="Lu J."/>
            <person name="Maheshwari M."/>
            <person name="Nguyen B.-V."/>
            <person name="Okwuonu G.O."/>
            <person name="Palmeiri A."/>
            <person name="Pasternak S."/>
            <person name="Perez L.M."/>
            <person name="Phelps K.A."/>
            <person name="Plopper F.J."/>
            <person name="Qiang B."/>
            <person name="Raymond C."/>
            <person name="Rodriguez R."/>
            <person name="Saenphimmachak C."/>
            <person name="Santibanez J."/>
            <person name="Shen H."/>
            <person name="Shen Y."/>
            <person name="Subramanian S."/>
            <person name="Tabor P.E."/>
            <person name="Verduzco D."/>
            <person name="Waldron L."/>
            <person name="Wang J."/>
            <person name="Wang J."/>
            <person name="Wang Q."/>
            <person name="Williams G.A."/>
            <person name="Wong G.K.-S."/>
            <person name="Yao Z."/>
            <person name="Zhang J."/>
            <person name="Zhang X."/>
            <person name="Zhao G."/>
            <person name="Zhou J."/>
            <person name="Zhou Y."/>
            <person name="Nelson D."/>
            <person name="Lehrach H."/>
            <person name="Reinhardt R."/>
            <person name="Naylor S.L."/>
            <person name="Yang H."/>
            <person name="Olson M."/>
            <person name="Weinstock G."/>
            <person name="Gibbs R.A."/>
        </authorList>
    </citation>
    <scope>NUCLEOTIDE SEQUENCE [LARGE SCALE GENOMIC DNA]</scope>
</reference>
<reference key="6">
    <citation type="journal article" date="2004" name="Genome Res.">
        <title>The status, quality, and expansion of the NIH full-length cDNA project: the Mammalian Gene Collection (MGC).</title>
        <authorList>
            <consortium name="The MGC Project Team"/>
        </authorList>
    </citation>
    <scope>NUCLEOTIDE SEQUENCE [LARGE SCALE MRNA] (ISOFORM 1)</scope>
</reference>
<reference key="7">
    <citation type="journal article" date="1987" name="Mol. Endocrinol.">
        <title>Cellular retinoic acid- and cellular retinol-binding proteins: complementary deoxyribonucleic acid cloning, chromosomal assignment, and tissue specific expression.</title>
        <authorList>
            <person name="Wei L.-N."/>
            <person name="Mertz J.R."/>
            <person name="Goodman D.S."/>
            <person name="Nguyen-Huu M.C."/>
        </authorList>
    </citation>
    <scope>NUCLEOTIDE SEQUENCE [MRNA] OF 1-121 (ISOFORM 1)</scope>
</reference>
<reference key="8">
    <citation type="journal article" date="2001" name="Proc. Natl. Acad. Sci. U.S.A.">
        <title>Identification, retinoid binding and X-ray analysis of a human retinol-binding protein.</title>
        <authorList>
            <person name="Folli C."/>
            <person name="Calderone V."/>
            <person name="Ottonello S."/>
            <person name="Bolchi A."/>
            <person name="Zanotti G."/>
            <person name="Stoppini M."/>
            <person name="Berni R."/>
        </authorList>
    </citation>
    <scope>TISSUE SPECIFICITY</scope>
</reference>
<reference key="9">
    <citation type="journal article" date="2005" name="J. Natl. Cancer Inst.">
        <title>Cellular retinol-binding protein I, a regulator of breast epithelial retinoic acid receptor activity, cell differentiation, and tumorigenicity.</title>
        <authorList>
            <person name="Farias E.F."/>
            <person name="Ong D.E."/>
            <person name="Ghyselinck N.B."/>
            <person name="Nakajo S."/>
            <person name="Kuppumbatti Y.S."/>
            <person name="Mira y Lopez R."/>
        </authorList>
    </citation>
    <scope>FUNCTION</scope>
    <scope>SUBCELLULAR LOCATION</scope>
    <scope>MUTAGENESIS OF LEU-30 AND ARG-59</scope>
</reference>
<reference key="10">
    <citation type="journal article" date="2011" name="BMC Syst. Biol.">
        <title>Initial characterization of the human central proteome.</title>
        <authorList>
            <person name="Burkard T.R."/>
            <person name="Planyavsky M."/>
            <person name="Kaupe I."/>
            <person name="Breitwieser F.P."/>
            <person name="Buerckstuemmer T."/>
            <person name="Bennett K.L."/>
            <person name="Superti-Furga G."/>
            <person name="Colinge J."/>
        </authorList>
    </citation>
    <scope>IDENTIFICATION BY MASS SPECTROMETRY [LARGE SCALE ANALYSIS]</scope>
</reference>
<reference key="11">
    <citation type="journal article" date="2012" name="Mol. Cell. Biol.">
        <title>Cross talk between signaling and vitamin A transport by the retinol-binding protein receptor STRA6.</title>
        <authorList>
            <person name="Berry D.C."/>
            <person name="O'Byrne S.M."/>
            <person name="Vreeland A.C."/>
            <person name="Blaner W.S."/>
            <person name="Noy N."/>
        </authorList>
    </citation>
    <scope>FUNCTION</scope>
    <scope>INTERACTION WITH STRA6</scope>
    <scope>SUBCELLULAR LOCATION</scope>
    <scope>MUTAGENESIS OF ARG-22; ARG-31 AND LYS-32</scope>
</reference>
<reference key="12">
    <citation type="journal article" date="2014" name="J. Proteomics">
        <title>An enzyme assisted RP-RPLC approach for in-depth analysis of human liver phosphoproteome.</title>
        <authorList>
            <person name="Bian Y."/>
            <person name="Song C."/>
            <person name="Cheng K."/>
            <person name="Dong M."/>
            <person name="Wang F."/>
            <person name="Huang J."/>
            <person name="Sun D."/>
            <person name="Wang L."/>
            <person name="Ye M."/>
            <person name="Zou H."/>
        </authorList>
    </citation>
    <scope>IDENTIFICATION BY MASS SPECTROMETRY [LARGE SCALE ANALYSIS]</scope>
    <source>
        <tissue>Liver</tissue>
    </source>
</reference>
<reference key="13">
    <citation type="journal article" date="2014" name="Mol. Cell. Proteomics">
        <title>Immunoaffinity enrichment and mass spectrometry analysis of protein methylation.</title>
        <authorList>
            <person name="Guo A."/>
            <person name="Gu H."/>
            <person name="Zhou J."/>
            <person name="Mulhern D."/>
            <person name="Wang Y."/>
            <person name="Lee K.A."/>
            <person name="Yang V."/>
            <person name="Aguiar M."/>
            <person name="Kornhauser J."/>
            <person name="Jia X."/>
            <person name="Ren J."/>
            <person name="Beausoleil S.A."/>
            <person name="Silva J.C."/>
            <person name="Vemulapalli V."/>
            <person name="Bedford M.T."/>
            <person name="Comb M.J."/>
        </authorList>
    </citation>
    <scope>METHYLATION [LARGE SCALE ANALYSIS] AT ARG-9 (ISOFORMS 2 AND 3)</scope>
    <scope>IDENTIFICATION BY MASS SPECTROMETRY [LARGE SCALE ANALYSIS]</scope>
    <source>
        <tissue>Colon carcinoma</tissue>
    </source>
</reference>
<reference evidence="9 10 11 12" key="14">
    <citation type="journal article" date="2016" name="J. Biol. Chem.">
        <title>Ligand Binding Induces Conformational Changes in Human Cellular Retinol-binding Protein 1 (CRBP1) Revealed by Atomic Resolution Crystal Structures.</title>
        <authorList>
            <person name="Silvaroli J.A."/>
            <person name="Arne J.M."/>
            <person name="Chelstowska S."/>
            <person name="Kiser P.D."/>
            <person name="Banerjee S."/>
            <person name="Golczak M."/>
        </authorList>
    </citation>
    <scope>X-RAY CRYSTALLOGRAPHY (0.89 ANGSTROMS) IN COMPLEX WITH ALL-TRANS-RETINOL</scope>
    <scope>FUNCTION</scope>
    <scope>DOMAIN</scope>
</reference>
<reference evidence="13 14 15 16 17 18 19" key="15">
    <citation type="journal article" date="2017" name="J. Struct. Biol.">
        <title>Structural and molecular determinants affecting the interaction of retinol with human CRBP1.</title>
        <authorList>
            <person name="Menozzi I."/>
            <person name="Vallese F."/>
            <person name="Polverini E."/>
            <person name="Folli C."/>
            <person name="Berni R."/>
            <person name="Zanotti G."/>
        </authorList>
    </citation>
    <scope>X-RAY CRYSTALLOGRAPHY (1.15 ANGSTROMS) IN COMPLEX WITH ALL-TRANS-RETINOL</scope>
    <scope>FUNCTION</scope>
    <scope>DOMAIN</scope>
    <scope>MUTAGENESIS OF LYS-41 AND GLN-109</scope>
</reference>
<protein>
    <recommendedName>
        <fullName>Retinol-binding protein 1</fullName>
    </recommendedName>
    <alternativeName>
        <fullName>Cellular retinol-binding protein</fullName>
        <shortName>CRBP</shortName>
    </alternativeName>
    <alternativeName>
        <fullName>Cellular retinol-binding protein I</fullName>
        <shortName>CRBP-I</shortName>
    </alternativeName>
</protein>
<dbReference type="EMBL" id="M11433">
    <property type="protein sequence ID" value="AAA60257.1"/>
    <property type="molecule type" value="mRNA"/>
</dbReference>
<dbReference type="EMBL" id="X07437">
    <property type="protein sequence ID" value="CAA30318.1"/>
    <property type="molecule type" value="Genomic_DNA"/>
</dbReference>
<dbReference type="EMBL" id="X07438">
    <property type="protein sequence ID" value="CAA30318.1"/>
    <property type="status" value="JOINED"/>
    <property type="molecule type" value="Genomic_DNA"/>
</dbReference>
<dbReference type="EMBL" id="AK290315">
    <property type="protein sequence ID" value="BAF83004.1"/>
    <property type="molecule type" value="mRNA"/>
</dbReference>
<dbReference type="EMBL" id="AK301684">
    <property type="protein sequence ID" value="BAH13536.1"/>
    <property type="molecule type" value="mRNA"/>
</dbReference>
<dbReference type="EMBL" id="AK309492">
    <property type="status" value="NOT_ANNOTATED_CDS"/>
    <property type="molecule type" value="Genomic_DNA"/>
</dbReference>
<dbReference type="EMBL" id="CR541979">
    <property type="protein sequence ID" value="CAG46776.1"/>
    <property type="molecule type" value="mRNA"/>
</dbReference>
<dbReference type="EMBL" id="CR542005">
    <property type="protein sequence ID" value="CAG46802.1"/>
    <property type="molecule type" value="mRNA"/>
</dbReference>
<dbReference type="EMBL" id="AC046134">
    <property type="status" value="NOT_ANNOTATED_CDS"/>
    <property type="molecule type" value="Genomic_DNA"/>
</dbReference>
<dbReference type="EMBL" id="BC121052">
    <property type="protein sequence ID" value="AAI21053.1"/>
    <property type="molecule type" value="mRNA"/>
</dbReference>
<dbReference type="EMBL" id="M36809">
    <property type="protein sequence ID" value="AAA35714.1"/>
    <property type="molecule type" value="mRNA"/>
</dbReference>
<dbReference type="CCDS" id="CCDS46925.1">
    <molecule id="P09455-2"/>
</dbReference>
<dbReference type="CCDS" id="CCDS46926.1">
    <molecule id="P09455-3"/>
</dbReference>
<dbReference type="CCDS" id="CCDS93396.1">
    <molecule id="P09455-1"/>
</dbReference>
<dbReference type="PIR" id="S00399">
    <property type="entry name" value="RJHUO"/>
</dbReference>
<dbReference type="RefSeq" id="NP_001124464.1">
    <molecule id="P09455-3"/>
    <property type="nucleotide sequence ID" value="NM_001130992.3"/>
</dbReference>
<dbReference type="RefSeq" id="NP_001124465.1">
    <molecule id="P09455-2"/>
    <property type="nucleotide sequence ID" value="NM_001130993.3"/>
</dbReference>
<dbReference type="RefSeq" id="NP_001352869.1">
    <molecule id="P09455-1"/>
    <property type="nucleotide sequence ID" value="NM_001365940.2"/>
</dbReference>
<dbReference type="RefSeq" id="NP_002890.2">
    <property type="nucleotide sequence ID" value="NM_002899.3"/>
</dbReference>
<dbReference type="PDB" id="5H8T">
    <property type="method" value="X-ray"/>
    <property type="resolution" value="1.21 A"/>
    <property type="chains" value="A=2-135"/>
</dbReference>
<dbReference type="PDB" id="5H9A">
    <property type="method" value="X-ray"/>
    <property type="resolution" value="1.38 A"/>
    <property type="chains" value="A=2-135"/>
</dbReference>
<dbReference type="PDB" id="5HA1">
    <property type="method" value="X-ray"/>
    <property type="resolution" value="1.35 A"/>
    <property type="chains" value="A=2-135"/>
</dbReference>
<dbReference type="PDB" id="5HBS">
    <property type="method" value="X-ray"/>
    <property type="resolution" value="0.89 A"/>
    <property type="chains" value="A=2-135"/>
</dbReference>
<dbReference type="PDB" id="5LJB">
    <property type="method" value="X-ray"/>
    <property type="resolution" value="1.26 A"/>
    <property type="chains" value="A=1-135"/>
</dbReference>
<dbReference type="PDB" id="5LJC">
    <property type="method" value="X-ray"/>
    <property type="resolution" value="1.43 A"/>
    <property type="chains" value="A=1-135"/>
</dbReference>
<dbReference type="PDB" id="5LJD">
    <property type="method" value="X-ray"/>
    <property type="resolution" value="1.61 A"/>
    <property type="chains" value="A=1-135"/>
</dbReference>
<dbReference type="PDB" id="5LJE">
    <property type="method" value="X-ray"/>
    <property type="resolution" value="1.40 A"/>
    <property type="chains" value="A=1-135"/>
</dbReference>
<dbReference type="PDB" id="5LJG">
    <property type="method" value="X-ray"/>
    <property type="resolution" value="1.15 A"/>
    <property type="chains" value="A=1-135"/>
</dbReference>
<dbReference type="PDB" id="5LJH">
    <property type="method" value="X-ray"/>
    <property type="resolution" value="1.52 A"/>
    <property type="chains" value="A=1-135"/>
</dbReference>
<dbReference type="PDB" id="5LJK">
    <property type="method" value="X-ray"/>
    <property type="resolution" value="1.70 A"/>
    <property type="chains" value="A=1-135"/>
</dbReference>
<dbReference type="PDB" id="6E5L">
    <property type="method" value="X-ray"/>
    <property type="resolution" value="1.17 A"/>
    <property type="chains" value="A=2-135"/>
</dbReference>
<dbReference type="PDB" id="6E5T">
    <property type="method" value="X-ray"/>
    <property type="resolution" value="1.55 A"/>
    <property type="chains" value="A=2-135"/>
</dbReference>
<dbReference type="PDB" id="6E6M">
    <property type="method" value="X-ray"/>
    <property type="resolution" value="1.55 A"/>
    <property type="chains" value="A/B/C=2-135"/>
</dbReference>
<dbReference type="PDB" id="8GD2">
    <property type="method" value="X-ray"/>
    <property type="resolution" value="1.13 A"/>
    <property type="chains" value="B=1-135"/>
</dbReference>
<dbReference type="PDB" id="8GDM">
    <property type="method" value="X-ray"/>
    <property type="resolution" value="1.80 A"/>
    <property type="chains" value="A=1-135"/>
</dbReference>
<dbReference type="PDB" id="8GEM">
    <property type="method" value="X-ray"/>
    <property type="resolution" value="1.55 A"/>
    <property type="chains" value="B=1-135"/>
</dbReference>
<dbReference type="PDB" id="8GEU">
    <property type="method" value="X-ray"/>
    <property type="resolution" value="1.47 A"/>
    <property type="chains" value="A=1-135"/>
</dbReference>
<dbReference type="PDB" id="8GEV">
    <property type="method" value="X-ray"/>
    <property type="resolution" value="1.85 A"/>
    <property type="chains" value="B=1-135"/>
</dbReference>
<dbReference type="PDB" id="8GEY">
    <property type="method" value="X-ray"/>
    <property type="resolution" value="1.30 A"/>
    <property type="chains" value="B=1-135"/>
</dbReference>
<dbReference type="PDBsum" id="5H8T"/>
<dbReference type="PDBsum" id="5H9A"/>
<dbReference type="PDBsum" id="5HA1"/>
<dbReference type="PDBsum" id="5HBS"/>
<dbReference type="PDBsum" id="5LJB"/>
<dbReference type="PDBsum" id="5LJC"/>
<dbReference type="PDBsum" id="5LJD"/>
<dbReference type="PDBsum" id="5LJE"/>
<dbReference type="PDBsum" id="5LJG"/>
<dbReference type="PDBsum" id="5LJH"/>
<dbReference type="PDBsum" id="5LJK"/>
<dbReference type="PDBsum" id="6E5L"/>
<dbReference type="PDBsum" id="6E5T"/>
<dbReference type="PDBsum" id="6E6M"/>
<dbReference type="PDBsum" id="8GD2"/>
<dbReference type="PDBsum" id="8GDM"/>
<dbReference type="PDBsum" id="8GEM"/>
<dbReference type="PDBsum" id="8GEU"/>
<dbReference type="PDBsum" id="8GEV"/>
<dbReference type="PDBsum" id="8GEY"/>
<dbReference type="SMR" id="P09455"/>
<dbReference type="BioGRID" id="111881">
    <property type="interactions" value="32"/>
</dbReference>
<dbReference type="FunCoup" id="P09455">
    <property type="interactions" value="1417"/>
</dbReference>
<dbReference type="IntAct" id="P09455">
    <property type="interactions" value="18"/>
</dbReference>
<dbReference type="MINT" id="P09455"/>
<dbReference type="STRING" id="9606.ENSP00000232219"/>
<dbReference type="DrugBank" id="DB00459">
    <property type="generic name" value="Acitretin"/>
</dbReference>
<dbReference type="DrugBank" id="DB06755">
    <property type="generic name" value="Beta carotene"/>
</dbReference>
<dbReference type="DrugBank" id="DB00162">
    <property type="generic name" value="Vitamin A"/>
</dbReference>
<dbReference type="DrugCentral" id="P09455"/>
<dbReference type="iPTMnet" id="P09455"/>
<dbReference type="PhosphoSitePlus" id="P09455"/>
<dbReference type="BioMuta" id="RBP1"/>
<dbReference type="DMDM" id="132387"/>
<dbReference type="jPOST" id="P09455"/>
<dbReference type="MassIVE" id="P09455"/>
<dbReference type="PaxDb" id="9606-ENSP00000232219"/>
<dbReference type="PeptideAtlas" id="P09455"/>
<dbReference type="ProteomicsDB" id="18915"/>
<dbReference type="ProteomicsDB" id="23698"/>
<dbReference type="ProteomicsDB" id="52219">
    <molecule id="P09455-1"/>
</dbReference>
<dbReference type="Pumba" id="P09455"/>
<dbReference type="Antibodypedia" id="17981">
    <property type="antibodies" value="506 antibodies from 35 providers"/>
</dbReference>
<dbReference type="DNASU" id="5947"/>
<dbReference type="Ensembl" id="ENST00000492918.1">
    <molecule id="P09455-3"/>
    <property type="protein sequence ID" value="ENSP00000429166.1"/>
    <property type="gene ID" value="ENSG00000114115.11"/>
</dbReference>
<dbReference type="Ensembl" id="ENST00000617459.4">
    <molecule id="P09455-2"/>
    <property type="protein sequence ID" value="ENSP00000477621.1"/>
    <property type="gene ID" value="ENSG00000114115.11"/>
</dbReference>
<dbReference type="Ensembl" id="ENST00000619087.5">
    <molecule id="P09455-1"/>
    <property type="protein sequence ID" value="ENSP00000482165.1"/>
    <property type="gene ID" value="ENSG00000114115.11"/>
</dbReference>
<dbReference type="GeneID" id="5947"/>
<dbReference type="KEGG" id="hsa:5947"/>
<dbReference type="UCSC" id="uc011bmx.2">
    <molecule id="P09455-1"/>
    <property type="organism name" value="human"/>
</dbReference>
<dbReference type="AGR" id="HGNC:9919"/>
<dbReference type="CTD" id="5947"/>
<dbReference type="DisGeNET" id="5947"/>
<dbReference type="GeneCards" id="RBP1"/>
<dbReference type="HGNC" id="HGNC:9919">
    <property type="gene designation" value="RBP1"/>
</dbReference>
<dbReference type="HPA" id="ENSG00000114115">
    <property type="expression patterns" value="Tissue enhanced (choroid plexus, ovary)"/>
</dbReference>
<dbReference type="MIM" id="180260">
    <property type="type" value="gene"/>
</dbReference>
<dbReference type="neXtProt" id="NX_P09455"/>
<dbReference type="OpenTargets" id="ENSG00000114115"/>
<dbReference type="PharmGKB" id="PA34286"/>
<dbReference type="VEuPathDB" id="HostDB:ENSG00000114115"/>
<dbReference type="eggNOG" id="KOG4015">
    <property type="taxonomic scope" value="Eukaryota"/>
</dbReference>
<dbReference type="GeneTree" id="ENSGT00940000159675"/>
<dbReference type="HOGENOM" id="CLU_113772_5_1_1"/>
<dbReference type="InParanoid" id="P09455"/>
<dbReference type="OrthoDB" id="354351at2759"/>
<dbReference type="PAN-GO" id="P09455">
    <property type="GO annotations" value="5 GO annotations based on evolutionary models"/>
</dbReference>
<dbReference type="PhylomeDB" id="P09455"/>
<dbReference type="TreeFam" id="TF316894"/>
<dbReference type="BioCyc" id="MetaCyc:ENSG00000114115-MONOMER"/>
<dbReference type="PathwayCommons" id="P09455"/>
<dbReference type="Reactome" id="R-HSA-2453902">
    <property type="pathway name" value="The canonical retinoid cycle in rods (twilight vision)"/>
</dbReference>
<dbReference type="Reactome" id="R-HSA-975634">
    <property type="pathway name" value="Retinoid metabolism and transport"/>
</dbReference>
<dbReference type="Reactome" id="R-HSA-9918442">
    <property type="pathway name" value="Defective visual phototransduction due to LRAT loss of function"/>
</dbReference>
<dbReference type="SABIO-RK" id="P09455"/>
<dbReference type="SignaLink" id="P09455"/>
<dbReference type="SIGNOR" id="P09455"/>
<dbReference type="BioGRID-ORCS" id="5947">
    <property type="hits" value="12 hits in 1149 CRISPR screens"/>
</dbReference>
<dbReference type="ChiTaRS" id="RBP1">
    <property type="organism name" value="human"/>
</dbReference>
<dbReference type="EvolutionaryTrace" id="P09455"/>
<dbReference type="GeneWiki" id="RBP1"/>
<dbReference type="GenomeRNAi" id="5947"/>
<dbReference type="Pharos" id="P09455">
    <property type="development level" value="Tbio"/>
</dbReference>
<dbReference type="PRO" id="PR:P09455"/>
<dbReference type="Proteomes" id="UP000005640">
    <property type="component" value="Chromosome 3"/>
</dbReference>
<dbReference type="RNAct" id="P09455">
    <property type="molecule type" value="protein"/>
</dbReference>
<dbReference type="Bgee" id="ENSG00000114115">
    <property type="expression patterns" value="Expressed in pigmented layer of retina and 184 other cell types or tissues"/>
</dbReference>
<dbReference type="ExpressionAtlas" id="P09455">
    <property type="expression patterns" value="baseline and differential"/>
</dbReference>
<dbReference type="GO" id="GO:0005829">
    <property type="term" value="C:cytosol"/>
    <property type="evidence" value="ECO:0000314"/>
    <property type="project" value="HPA"/>
</dbReference>
<dbReference type="GO" id="GO:0005811">
    <property type="term" value="C:lipid droplet"/>
    <property type="evidence" value="ECO:0000314"/>
    <property type="project" value="UniProtKB"/>
</dbReference>
<dbReference type="GO" id="GO:0005654">
    <property type="term" value="C:nucleoplasm"/>
    <property type="evidence" value="ECO:0000314"/>
    <property type="project" value="HPA"/>
</dbReference>
<dbReference type="GO" id="GO:0005634">
    <property type="term" value="C:nucleus"/>
    <property type="evidence" value="ECO:0000318"/>
    <property type="project" value="GO_Central"/>
</dbReference>
<dbReference type="GO" id="GO:1904768">
    <property type="term" value="F:all-trans-retinol binding"/>
    <property type="evidence" value="ECO:0000314"/>
    <property type="project" value="UniProtKB"/>
</dbReference>
<dbReference type="GO" id="GO:0005504">
    <property type="term" value="F:fatty acid binding"/>
    <property type="evidence" value="ECO:0000318"/>
    <property type="project" value="GO_Central"/>
</dbReference>
<dbReference type="GO" id="GO:0016918">
    <property type="term" value="F:retinal binding"/>
    <property type="evidence" value="ECO:0007669"/>
    <property type="project" value="UniProtKB-KW"/>
</dbReference>
<dbReference type="GO" id="GO:0005501">
    <property type="term" value="F:retinoid binding"/>
    <property type="evidence" value="ECO:0000304"/>
    <property type="project" value="ProtInc"/>
</dbReference>
<dbReference type="GO" id="GO:0015908">
    <property type="term" value="P:fatty acid transport"/>
    <property type="evidence" value="ECO:0000318"/>
    <property type="project" value="GO_Central"/>
</dbReference>
<dbReference type="GO" id="GO:0055088">
    <property type="term" value="P:lipid homeostasis"/>
    <property type="evidence" value="ECO:0000315"/>
    <property type="project" value="UniProtKB"/>
</dbReference>
<dbReference type="GO" id="GO:0002138">
    <property type="term" value="P:retinoic acid biosynthetic process"/>
    <property type="evidence" value="ECO:0007669"/>
    <property type="project" value="InterPro"/>
</dbReference>
<dbReference type="GO" id="GO:0006776">
    <property type="term" value="P:vitamin A metabolic process"/>
    <property type="evidence" value="ECO:0000315"/>
    <property type="project" value="UniProtKB"/>
</dbReference>
<dbReference type="CDD" id="cd19462">
    <property type="entry name" value="CRBP1"/>
    <property type="match status" value="1"/>
</dbReference>
<dbReference type="FunFam" id="2.40.128.20:FF:000001">
    <property type="entry name" value="Fatty acid-binding protein, adipocyte"/>
    <property type="match status" value="1"/>
</dbReference>
<dbReference type="Gene3D" id="2.40.128.20">
    <property type="match status" value="1"/>
</dbReference>
<dbReference type="IDEAL" id="IID00705"/>
<dbReference type="InterPro" id="IPR012674">
    <property type="entry name" value="Calycin"/>
</dbReference>
<dbReference type="InterPro" id="IPR031264">
    <property type="entry name" value="CRBP1"/>
</dbReference>
<dbReference type="InterPro" id="IPR000463">
    <property type="entry name" value="Fatty_acid-bd"/>
</dbReference>
<dbReference type="InterPro" id="IPR031259">
    <property type="entry name" value="ILBP"/>
</dbReference>
<dbReference type="InterPro" id="IPR000566">
    <property type="entry name" value="Lipocln_cytosolic_FA-bd_dom"/>
</dbReference>
<dbReference type="PANTHER" id="PTHR11955">
    <property type="entry name" value="FATTY ACID BINDING PROTEIN"/>
    <property type="match status" value="1"/>
</dbReference>
<dbReference type="Pfam" id="PF00061">
    <property type="entry name" value="Lipocalin"/>
    <property type="match status" value="1"/>
</dbReference>
<dbReference type="PRINTS" id="PR00178">
    <property type="entry name" value="FATTYACIDBP"/>
</dbReference>
<dbReference type="SUPFAM" id="SSF50814">
    <property type="entry name" value="Lipocalins"/>
    <property type="match status" value="1"/>
</dbReference>
<dbReference type="PROSITE" id="PS00214">
    <property type="entry name" value="FABP"/>
    <property type="match status" value="1"/>
</dbReference>
<name>RET1_HUMAN</name>
<organism>
    <name type="scientific">Homo sapiens</name>
    <name type="common">Human</name>
    <dbReference type="NCBI Taxonomy" id="9606"/>
    <lineage>
        <taxon>Eukaryota</taxon>
        <taxon>Metazoa</taxon>
        <taxon>Chordata</taxon>
        <taxon>Craniata</taxon>
        <taxon>Vertebrata</taxon>
        <taxon>Euteleostomi</taxon>
        <taxon>Mammalia</taxon>
        <taxon>Eutheria</taxon>
        <taxon>Euarchontoglires</taxon>
        <taxon>Primates</taxon>
        <taxon>Haplorrhini</taxon>
        <taxon>Catarrhini</taxon>
        <taxon>Hominidae</taxon>
        <taxon>Homo</taxon>
    </lineage>
</organism>
<proteinExistence type="evidence at protein level"/>
<sequence length="135" mass="15850">MPVDFTGYWKMLVNENFEEYLRALDVNVALRKIANLLKPDKEIVQDGDHMIIRTLSTFRNYIMDFQVGKEFEEDLTGIDDRKCMTTVSWDGDKLQCVQKGEKEGRGWTQWIEGDELHLEMRVEGVVCKQVFKKVQ</sequence>
<comment type="function">
    <text evidence="2 3 4 5">Cytoplasmic retinol-binding protein (PubMed:22665496, PubMed:26900151, PubMed:28057518). Accepts retinol from the transport protein STRA6, and thereby contributes to retinol uptake, storage and retinoid homeostasis (PubMed:15632377, PubMed:22665496).</text>
</comment>
<comment type="subunit">
    <text evidence="3">Interacts (only as retinol-free apoprotein) with STRA6.</text>
</comment>
<comment type="interaction">
    <interactant intactId="EBI-2623483">
        <id>P09455</id>
    </interactant>
    <interactant intactId="EBI-741925">
        <id>P49366</id>
        <label>DHPS</label>
    </interactant>
    <organismsDiffer>false</organismsDiffer>
    <experiments>3</experiments>
</comment>
<comment type="interaction">
    <interactant intactId="EBI-2623483">
        <id>P09455</id>
    </interactant>
    <interactant intactId="EBI-1044859">
        <id>Q9UBN6</id>
        <label>TNFRSF10D</label>
    </interactant>
    <organismsDiffer>false</organismsDiffer>
    <experiments>3</experiments>
</comment>
<comment type="interaction">
    <interactant intactId="EBI-2623483">
        <id>P09455</id>
    </interactant>
    <interactant intactId="EBI-948354">
        <id>Q6DKK2</id>
        <label>TTC19</label>
    </interactant>
    <organismsDiffer>false</organismsDiffer>
    <experiments>3</experiments>
</comment>
<comment type="interaction">
    <interactant intactId="EBI-2623483">
        <id>P09455</id>
    </interactant>
    <interactant intactId="EBI-2340110">
        <id>Q8N2K1</id>
        <label>UBE2J2</label>
    </interactant>
    <organismsDiffer>false</organismsDiffer>
    <experiments>3</experiments>
</comment>
<comment type="subcellular location">
    <subcellularLocation>
        <location evidence="8">Cytoplasm</location>
    </subcellularLocation>
    <subcellularLocation>
        <location evidence="2">Lipid droplet</location>
    </subcellularLocation>
</comment>
<comment type="alternative products">
    <event type="alternative splicing"/>
    <isoform>
        <id>P09455-1</id>
        <name>1</name>
        <sequence type="displayed"/>
    </isoform>
    <isoform>
        <id>P09455-2</id>
        <name>2</name>
        <sequence type="described" ref="VSP_046201 VSP_046202"/>
    </isoform>
    <isoform>
        <id>P09455-3</id>
        <name>3</name>
        <sequence type="described" ref="VSP_046201 VSP_046203"/>
    </isoform>
</comment>
<comment type="tissue specificity">
    <text evidence="1">Detected in nearly all the tissues with higher expression in adult ovary, pancreas, pituitary gland and adrenal gland, and fetal liver.</text>
</comment>
<comment type="domain">
    <text evidence="4 5">Forms a beta-barrel structure that accommodates hydrophobic ligands in its interior.</text>
</comment>
<comment type="similarity">
    <text evidence="7">Belongs to the calycin superfamily. Fatty-acid binding protein (FABP) family.</text>
</comment>
<feature type="chain" id="PRO_0000067392" description="Retinol-binding protein 1">
    <location>
        <begin position="1"/>
        <end position="135"/>
    </location>
</feature>
<feature type="region of interest" description="Important for interaction with STRA6" evidence="3">
    <location>
        <begin position="22"/>
        <end position="32"/>
    </location>
</feature>
<feature type="binding site" evidence="4 9 12 13 14">
    <location>
        <position position="41"/>
    </location>
    <ligand>
        <name>all-trans-retinol</name>
        <dbReference type="ChEBI" id="CHEBI:17336"/>
    </ligand>
</feature>
<feature type="binding site" evidence="5 14 16">
    <location>
        <position position="63"/>
    </location>
    <ligand>
        <name>all-trans-retinol</name>
        <dbReference type="ChEBI" id="CHEBI:17336"/>
    </ligand>
</feature>
<feature type="binding site" evidence="4 5 9 12 13 14 15 16">
    <location>
        <position position="109"/>
    </location>
    <ligand>
        <name>all-trans-retinol</name>
        <dbReference type="ChEBI" id="CHEBI:17336"/>
    </ligand>
</feature>
<feature type="splice variant" id="VSP_046201" description="In isoform 2 and isoform 3." evidence="6">
    <original>M</original>
    <variation>MDPPAGFVRAGNPAVAAPQSPLSPEGAHFRAAHHPRSTGSRCPGSLQPSRPLVANWLQSLPEM</variation>
    <location>
        <position position="1"/>
    </location>
</feature>
<feature type="splice variant" id="VSP_046202" description="In isoform 2." evidence="6">
    <original>TTVSWDGDKLQCVQKGEKEGRGWTQWIEGDELHLEMRVEGVVCKQVFKKVQ</original>
    <variation>SETGFSS</variation>
    <location>
        <begin position="85"/>
        <end position="135"/>
    </location>
</feature>
<feature type="splice variant" id="VSP_046203" description="In isoform 3." evidence="6">
    <original>TTVSWDGDKLQCVQKGEKEGRGWTQWIEGDELHLEMRVEGVVCKQVFKKVQ</original>
    <variation>AGVQSRDLSSL</variation>
    <location>
        <begin position="85"/>
        <end position="135"/>
    </location>
</feature>
<feature type="mutagenesis site" description="No effect on retinol binding. Abolishes interaction with STA6 and the ability to enhance STA6-mediated vitamin A uptake." evidence="5">
    <original>R</original>
    <variation>A</variation>
    <location>
        <position position="22"/>
    </location>
</feature>
<feature type="mutagenesis site" description="Decreases cellular retinol uptake and impairs retinol storage." evidence="2">
    <original>L</original>
    <variation>A</variation>
    <location>
        <position position="30"/>
    </location>
</feature>
<feature type="mutagenesis site" description="No effect on retinol binding. Abolishes interaction with STA6 and the ability to enhance STA6-mediated vitamin A uptake." evidence="5">
    <original>R</original>
    <variation>A</variation>
    <location>
        <position position="31"/>
    </location>
</feature>
<feature type="mutagenesis site" description="No effect on retinol binding. Abolishes interaction with STA6 and the ability to enhance STA6-mediated vitamin A uptake." evidence="5">
    <original>K</original>
    <variation>A</variation>
    <location>
        <position position="32"/>
    </location>
</feature>
<feature type="mutagenesis site" description="Strongly decreased affinity for retinol. Further decrease in affinity for retinol; when associated with L-109." evidence="5">
    <original>K</original>
    <variation>L</variation>
    <location>
        <position position="41"/>
    </location>
</feature>
<feature type="mutagenesis site" description="Decreases cellular retinol uptake and impairs retinol storage." evidence="2">
    <original>R</original>
    <variation>E</variation>
    <location>
        <position position="59"/>
    </location>
</feature>
<feature type="mutagenesis site" description="Strongly decreased affinity for retinol. Further decrease in for retinol; when associated with L-41." evidence="5">
    <original>Q</original>
    <variation>L</variation>
    <location>
        <position position="109"/>
    </location>
</feature>
<feature type="strand" evidence="21">
    <location>
        <begin position="7"/>
        <end position="16"/>
    </location>
</feature>
<feature type="helix" evidence="21">
    <location>
        <begin position="17"/>
        <end position="23"/>
    </location>
</feature>
<feature type="helix" evidence="21">
    <location>
        <begin position="28"/>
        <end position="34"/>
    </location>
</feature>
<feature type="strand" evidence="21">
    <location>
        <begin position="40"/>
        <end position="46"/>
    </location>
</feature>
<feature type="strand" evidence="21">
    <location>
        <begin position="49"/>
        <end position="55"/>
    </location>
</feature>
<feature type="strand" evidence="21">
    <location>
        <begin position="61"/>
        <end position="66"/>
    </location>
</feature>
<feature type="strand" evidence="21">
    <location>
        <begin position="71"/>
        <end position="74"/>
    </location>
</feature>
<feature type="turn" evidence="21">
    <location>
        <begin position="76"/>
        <end position="79"/>
    </location>
</feature>
<feature type="strand" evidence="21">
    <location>
        <begin position="82"/>
        <end position="90"/>
    </location>
</feature>
<feature type="strand" evidence="21">
    <location>
        <begin position="93"/>
        <end position="102"/>
    </location>
</feature>
<feature type="strand" evidence="21">
    <location>
        <begin position="106"/>
        <end position="112"/>
    </location>
</feature>
<feature type="strand" evidence="21">
    <location>
        <begin position="115"/>
        <end position="122"/>
    </location>
</feature>
<feature type="strand" evidence="21">
    <location>
        <begin position="125"/>
        <end position="134"/>
    </location>
</feature>
<feature type="modified residue" description="Omega-N-methylarginine" evidence="20">
    <location sequence="P09455-2">
        <position position="9"/>
    </location>
</feature>
<feature type="sequence conflict" description="In Ref. 3; BAH13536." evidence="7" ref="3">
    <original>P</original>
    <variation>L</variation>
    <location sequence="P09455-2">
        <position position="18"/>
    </location>
</feature>
<feature type="modified residue" description="Omega-N-methylarginine" evidence="20">
    <location sequence="P09455-3">
        <position position="9"/>
    </location>
</feature>
<accession>P09455</accession>
<accession>A8K2Q0</accession>
<accession>B7Z7A0</accession>
<accession>E7EWV0</accession>
<accession>F2Z2F2</accession>
<accession>Q6FGX8</accession>
<evidence type="ECO:0000269" key="1">
    <source>
    </source>
</evidence>
<evidence type="ECO:0000269" key="2">
    <source>
    </source>
</evidence>
<evidence type="ECO:0000269" key="3">
    <source>
    </source>
</evidence>
<evidence type="ECO:0000269" key="4">
    <source>
    </source>
</evidence>
<evidence type="ECO:0000269" key="5">
    <source>
    </source>
</evidence>
<evidence type="ECO:0000303" key="6">
    <source>
    </source>
</evidence>
<evidence type="ECO:0000305" key="7"/>
<evidence type="ECO:0000305" key="8">
    <source>
    </source>
</evidence>
<evidence type="ECO:0007744" key="9">
    <source>
        <dbReference type="PDB" id="5H8T"/>
    </source>
</evidence>
<evidence type="ECO:0007744" key="10">
    <source>
        <dbReference type="PDB" id="5H9A"/>
    </source>
</evidence>
<evidence type="ECO:0007744" key="11">
    <source>
        <dbReference type="PDB" id="5HA1"/>
    </source>
</evidence>
<evidence type="ECO:0007744" key="12">
    <source>
        <dbReference type="PDB" id="5HBS"/>
    </source>
</evidence>
<evidence type="ECO:0007744" key="13">
    <source>
        <dbReference type="PDB" id="5LJB"/>
    </source>
</evidence>
<evidence type="ECO:0007744" key="14">
    <source>
        <dbReference type="PDB" id="5LJC"/>
    </source>
</evidence>
<evidence type="ECO:0007744" key="15">
    <source>
        <dbReference type="PDB" id="5LJD"/>
    </source>
</evidence>
<evidence type="ECO:0007744" key="16">
    <source>
        <dbReference type="PDB" id="5LJE"/>
    </source>
</evidence>
<evidence type="ECO:0007744" key="17">
    <source>
        <dbReference type="PDB" id="5LJG"/>
    </source>
</evidence>
<evidence type="ECO:0007744" key="18">
    <source>
        <dbReference type="PDB" id="5LJH"/>
    </source>
</evidence>
<evidence type="ECO:0007744" key="19">
    <source>
        <dbReference type="PDB" id="5LJK"/>
    </source>
</evidence>
<evidence type="ECO:0007744" key="20">
    <source>
    </source>
</evidence>
<evidence type="ECO:0007829" key="21">
    <source>
        <dbReference type="PDB" id="5HBS"/>
    </source>
</evidence>
<keyword id="KW-0002">3D-structure</keyword>
<keyword id="KW-0025">Alternative splicing</keyword>
<keyword id="KW-0963">Cytoplasm</keyword>
<keyword id="KW-0551">Lipid droplet</keyword>
<keyword id="KW-0488">Methylation</keyword>
<keyword id="KW-1267">Proteomics identification</keyword>
<keyword id="KW-1185">Reference proteome</keyword>
<keyword id="KW-0683">Retinol-binding</keyword>
<keyword id="KW-0813">Transport</keyword>
<keyword id="KW-0845">Vitamin A</keyword>